<gene>
    <name evidence="3" type="primary">RXLR37</name>
</gene>
<name>RLR37_PLAVT</name>
<dbReference type="GO" id="GO:0005576">
    <property type="term" value="C:extracellular region"/>
    <property type="evidence" value="ECO:0007669"/>
    <property type="project" value="UniProtKB-SubCell"/>
</dbReference>
<dbReference type="GO" id="GO:0030430">
    <property type="term" value="C:host cell cytoplasm"/>
    <property type="evidence" value="ECO:0007669"/>
    <property type="project" value="UniProtKB-SubCell"/>
</dbReference>
<dbReference type="GO" id="GO:0042025">
    <property type="term" value="C:host cell nucleus"/>
    <property type="evidence" value="ECO:0007669"/>
    <property type="project" value="UniProtKB-SubCell"/>
</dbReference>
<evidence type="ECO:0000255" key="1"/>
<evidence type="ECO:0000269" key="2">
    <source>
    </source>
</evidence>
<evidence type="ECO:0000303" key="3">
    <source>
    </source>
</evidence>
<evidence type="ECO:0000305" key="4"/>
<evidence type="ECO:0000305" key="5">
    <source>
    </source>
</evidence>
<accession>P0CV06</accession>
<keyword id="KW-1035">Host cytoplasm</keyword>
<keyword id="KW-1048">Host nucleus</keyword>
<keyword id="KW-0964">Secreted</keyword>
<keyword id="KW-0732">Signal</keyword>
<keyword id="KW-0843">Virulence</keyword>
<reference key="1">
    <citation type="journal article" date="2018" name="Front. Plant Sci.">
        <title>In planta functional analysis and subcellular localization of the oomycete pathogen Plasmopara viticola candidate RXLR effector repertoire.</title>
        <authorList>
            <person name="Liu Y."/>
            <person name="Lan X."/>
            <person name="Song S."/>
            <person name="Yin L."/>
            <person name="Dry I.B."/>
            <person name="Qu J."/>
            <person name="Xiang J."/>
            <person name="Lu J."/>
        </authorList>
    </citation>
    <scope>NUCLEOTIDE SEQUENCE [MRNA]</scope>
    <scope>DOMAIN</scope>
    <scope>FUNCTION</scope>
    <scope>SUBCELLULAR LOCATION</scope>
</reference>
<comment type="function">
    <text evidence="2">Secreted effector that completely suppresses the host cell death induced by cell death-inducing proteins.</text>
</comment>
<comment type="subcellular location">
    <subcellularLocation>
        <location evidence="2">Secreted</location>
    </subcellularLocation>
    <subcellularLocation>
        <location evidence="2">Host nucleus</location>
    </subcellularLocation>
    <subcellularLocation>
        <location evidence="2">Host cytoplasm</location>
    </subcellularLocation>
</comment>
<comment type="domain">
    <text evidence="5">The RxLR-dEER motif acts to carry the protein into the host cell cytoplasm through binding to cell surface phosphatidylinositol-3-phosphate.</text>
</comment>
<comment type="similarity">
    <text evidence="4">Belongs to the RxLR effector family.</text>
</comment>
<proteinExistence type="evidence at transcript level"/>
<protein>
    <recommendedName>
        <fullName evidence="3">Secreted RxLR effector protein 37</fullName>
    </recommendedName>
</protein>
<organism>
    <name type="scientific">Plasmopara viticola</name>
    <name type="common">Downy mildew of grapevine</name>
    <name type="synonym">Botrytis viticola</name>
    <dbReference type="NCBI Taxonomy" id="143451"/>
    <lineage>
        <taxon>Eukaryota</taxon>
        <taxon>Sar</taxon>
        <taxon>Stramenopiles</taxon>
        <taxon>Oomycota</taxon>
        <taxon>Peronosporales</taxon>
        <taxon>Peronosporaceae</taxon>
        <taxon>Plasmopara</taxon>
    </lineage>
</organism>
<sequence length="140" mass="16317">MTYRLPFVAVILFVTAKHVVLALENANWIEASKTVPSDSTQTTRVAYRRITGGFNERFLRQLEKKPGVNDKRDEERANFFEAVFKNTLFNAFGYRSDAKAKLQDPNSNIFVNLLRRIFVWWAKNKPEFNKNADMHKEAMV</sequence>
<feature type="signal peptide" evidence="1">
    <location>
        <begin position="1"/>
        <end position="22"/>
    </location>
</feature>
<feature type="chain" id="PRO_0000447915" description="Secreted RxLR effector protein 37">
    <location>
        <begin position="23"/>
        <end position="140"/>
    </location>
</feature>
<feature type="short sequence motif" description="RxLR-dEER" evidence="5">
    <location>
        <begin position="57"/>
        <end position="76"/>
    </location>
</feature>